<dbReference type="EC" id="4.6.1.12" evidence="1"/>
<dbReference type="EMBL" id="CP000323">
    <property type="protein sequence ID" value="ABE74930.1"/>
    <property type="molecule type" value="Genomic_DNA"/>
</dbReference>
<dbReference type="RefSeq" id="WP_011513485.1">
    <property type="nucleotide sequence ID" value="NC_007969.1"/>
</dbReference>
<dbReference type="SMR" id="Q1QBM3"/>
<dbReference type="STRING" id="335284.Pcryo_1149"/>
<dbReference type="KEGG" id="pcr:Pcryo_1149"/>
<dbReference type="eggNOG" id="COG0245">
    <property type="taxonomic scope" value="Bacteria"/>
</dbReference>
<dbReference type="HOGENOM" id="CLU_084630_2_0_6"/>
<dbReference type="UniPathway" id="UPA00056">
    <property type="reaction ID" value="UER00095"/>
</dbReference>
<dbReference type="Proteomes" id="UP000002425">
    <property type="component" value="Chromosome"/>
</dbReference>
<dbReference type="GO" id="GO:0008685">
    <property type="term" value="F:2-C-methyl-D-erythritol 2,4-cyclodiphosphate synthase activity"/>
    <property type="evidence" value="ECO:0007669"/>
    <property type="project" value="UniProtKB-UniRule"/>
</dbReference>
<dbReference type="GO" id="GO:0046872">
    <property type="term" value="F:metal ion binding"/>
    <property type="evidence" value="ECO:0007669"/>
    <property type="project" value="UniProtKB-KW"/>
</dbReference>
<dbReference type="GO" id="GO:0019288">
    <property type="term" value="P:isopentenyl diphosphate biosynthetic process, methylerythritol 4-phosphate pathway"/>
    <property type="evidence" value="ECO:0007669"/>
    <property type="project" value="UniProtKB-UniRule"/>
</dbReference>
<dbReference type="GO" id="GO:0016114">
    <property type="term" value="P:terpenoid biosynthetic process"/>
    <property type="evidence" value="ECO:0007669"/>
    <property type="project" value="InterPro"/>
</dbReference>
<dbReference type="CDD" id="cd00554">
    <property type="entry name" value="MECDP_synthase"/>
    <property type="match status" value="1"/>
</dbReference>
<dbReference type="Gene3D" id="3.30.1330.50">
    <property type="entry name" value="2-C-methyl-D-erythritol 2,4-cyclodiphosphate synthase"/>
    <property type="match status" value="1"/>
</dbReference>
<dbReference type="HAMAP" id="MF_00107">
    <property type="entry name" value="IspF"/>
    <property type="match status" value="1"/>
</dbReference>
<dbReference type="InterPro" id="IPR003526">
    <property type="entry name" value="MECDP_synthase"/>
</dbReference>
<dbReference type="InterPro" id="IPR020555">
    <property type="entry name" value="MECDP_synthase_CS"/>
</dbReference>
<dbReference type="InterPro" id="IPR036571">
    <property type="entry name" value="MECDP_synthase_sf"/>
</dbReference>
<dbReference type="NCBIfam" id="TIGR00151">
    <property type="entry name" value="ispF"/>
    <property type="match status" value="1"/>
</dbReference>
<dbReference type="PANTHER" id="PTHR43181">
    <property type="entry name" value="2-C-METHYL-D-ERYTHRITOL 2,4-CYCLODIPHOSPHATE SYNTHASE, CHLOROPLASTIC"/>
    <property type="match status" value="1"/>
</dbReference>
<dbReference type="PANTHER" id="PTHR43181:SF1">
    <property type="entry name" value="2-C-METHYL-D-ERYTHRITOL 2,4-CYCLODIPHOSPHATE SYNTHASE, CHLOROPLASTIC"/>
    <property type="match status" value="1"/>
</dbReference>
<dbReference type="Pfam" id="PF02542">
    <property type="entry name" value="YgbB"/>
    <property type="match status" value="1"/>
</dbReference>
<dbReference type="SUPFAM" id="SSF69765">
    <property type="entry name" value="IpsF-like"/>
    <property type="match status" value="1"/>
</dbReference>
<dbReference type="PROSITE" id="PS01350">
    <property type="entry name" value="ISPF"/>
    <property type="match status" value="1"/>
</dbReference>
<sequence>MIMIKIGQGIDVHAFHNNGQQQQYVVLAGVPIDHTHSLLAHSDGDVVLHALADALLGALALGDIGQHFPDTDAANAGLDSRVLLRYVYGKVLAAGYILGNADITVMCERPKLAPHNLAMRANIASDLQTDVSNISVKATTTEKLGFTGRQEGIMANAVVLLVPNASGV</sequence>
<name>ISPF_PSYCK</name>
<organism>
    <name type="scientific">Psychrobacter cryohalolentis (strain ATCC BAA-1226 / DSM 17306 / VKM B-2378 / K5)</name>
    <dbReference type="NCBI Taxonomy" id="335284"/>
    <lineage>
        <taxon>Bacteria</taxon>
        <taxon>Pseudomonadati</taxon>
        <taxon>Pseudomonadota</taxon>
        <taxon>Gammaproteobacteria</taxon>
        <taxon>Moraxellales</taxon>
        <taxon>Moraxellaceae</taxon>
        <taxon>Psychrobacter</taxon>
    </lineage>
</organism>
<comment type="function">
    <text evidence="1">Involved in the biosynthesis of isopentenyl diphosphate (IPP) and dimethylallyl diphosphate (DMAPP), two major building blocks of isoprenoid compounds. Catalyzes the conversion of 4-diphosphocytidyl-2-C-methyl-D-erythritol 2-phosphate (CDP-ME2P) to 2-C-methyl-D-erythritol 2,4-cyclodiphosphate (ME-CPP) with a corresponding release of cytidine 5-monophosphate (CMP).</text>
</comment>
<comment type="catalytic activity">
    <reaction evidence="1">
        <text>4-CDP-2-C-methyl-D-erythritol 2-phosphate = 2-C-methyl-D-erythritol 2,4-cyclic diphosphate + CMP</text>
        <dbReference type="Rhea" id="RHEA:23864"/>
        <dbReference type="ChEBI" id="CHEBI:57919"/>
        <dbReference type="ChEBI" id="CHEBI:58483"/>
        <dbReference type="ChEBI" id="CHEBI:60377"/>
        <dbReference type="EC" id="4.6.1.12"/>
    </reaction>
</comment>
<comment type="cofactor">
    <cofactor evidence="1">
        <name>a divalent metal cation</name>
        <dbReference type="ChEBI" id="CHEBI:60240"/>
    </cofactor>
    <text evidence="1">Binds 1 divalent metal cation per subunit.</text>
</comment>
<comment type="pathway">
    <text evidence="1">Isoprenoid biosynthesis; isopentenyl diphosphate biosynthesis via DXP pathway; isopentenyl diphosphate from 1-deoxy-D-xylulose 5-phosphate: step 4/6.</text>
</comment>
<comment type="subunit">
    <text evidence="1">Homotrimer.</text>
</comment>
<comment type="similarity">
    <text evidence="1">Belongs to the IspF family.</text>
</comment>
<protein>
    <recommendedName>
        <fullName evidence="1">2-C-methyl-D-erythritol 2,4-cyclodiphosphate synthase</fullName>
        <shortName evidence="1">MECDP-synthase</shortName>
        <shortName evidence="1">MECPP-synthase</shortName>
        <shortName evidence="1">MECPS</shortName>
        <ecNumber evidence="1">4.6.1.12</ecNumber>
    </recommendedName>
</protein>
<keyword id="KW-0414">Isoprene biosynthesis</keyword>
<keyword id="KW-0456">Lyase</keyword>
<keyword id="KW-0479">Metal-binding</keyword>
<accession>Q1QBM3</accession>
<reference key="1">
    <citation type="submission" date="2006-03" db="EMBL/GenBank/DDBJ databases">
        <title>Complete sequence of chromosome of Psychrobacter cryohalolentis K5.</title>
        <authorList>
            <consortium name="US DOE Joint Genome Institute"/>
            <person name="Copeland A."/>
            <person name="Lucas S."/>
            <person name="Lapidus A."/>
            <person name="Barry K."/>
            <person name="Detter J.C."/>
            <person name="Glavina T."/>
            <person name="Hammon N."/>
            <person name="Israni S."/>
            <person name="Dalin E."/>
            <person name="Tice H."/>
            <person name="Pitluck S."/>
            <person name="Brettin T."/>
            <person name="Bruce D."/>
            <person name="Han C."/>
            <person name="Tapia R."/>
            <person name="Sims D.R."/>
            <person name="Gilna P."/>
            <person name="Schmutz J."/>
            <person name="Larimer F."/>
            <person name="Land M."/>
            <person name="Hauser L."/>
            <person name="Kyrpides N."/>
            <person name="Kim E."/>
            <person name="Richardson P."/>
        </authorList>
    </citation>
    <scope>NUCLEOTIDE SEQUENCE [LARGE SCALE GENOMIC DNA]</scope>
    <source>
        <strain>ATCC BAA-1226 / DSM 17306 / VKM B-2378 / K5</strain>
    </source>
</reference>
<feature type="chain" id="PRO_1000022866" description="2-C-methyl-D-erythritol 2,4-cyclodiphosphate synthase">
    <location>
        <begin position="1"/>
        <end position="168"/>
    </location>
</feature>
<feature type="binding site" evidence="1">
    <location>
        <begin position="11"/>
        <end position="13"/>
    </location>
    <ligand>
        <name>4-CDP-2-C-methyl-D-erythritol 2-phosphate</name>
        <dbReference type="ChEBI" id="CHEBI:57919"/>
    </ligand>
</feature>
<feature type="binding site" evidence="1">
    <location>
        <position position="11"/>
    </location>
    <ligand>
        <name>a divalent metal cation</name>
        <dbReference type="ChEBI" id="CHEBI:60240"/>
    </ligand>
</feature>
<feature type="binding site" evidence="1">
    <location>
        <position position="13"/>
    </location>
    <ligand>
        <name>a divalent metal cation</name>
        <dbReference type="ChEBI" id="CHEBI:60240"/>
    </ligand>
</feature>
<feature type="binding site" evidence="1">
    <location>
        <begin position="41"/>
        <end position="42"/>
    </location>
    <ligand>
        <name>4-CDP-2-C-methyl-D-erythritol 2-phosphate</name>
        <dbReference type="ChEBI" id="CHEBI:57919"/>
    </ligand>
</feature>
<feature type="binding site" evidence="1">
    <location>
        <position position="49"/>
    </location>
    <ligand>
        <name>a divalent metal cation</name>
        <dbReference type="ChEBI" id="CHEBI:60240"/>
    </ligand>
</feature>
<feature type="binding site" evidence="1">
    <location>
        <begin position="63"/>
        <end position="65"/>
    </location>
    <ligand>
        <name>4-CDP-2-C-methyl-D-erythritol 2-phosphate</name>
        <dbReference type="ChEBI" id="CHEBI:57919"/>
    </ligand>
</feature>
<feature type="binding site" evidence="1">
    <location>
        <begin position="68"/>
        <end position="72"/>
    </location>
    <ligand>
        <name>4-CDP-2-C-methyl-D-erythritol 2-phosphate</name>
        <dbReference type="ChEBI" id="CHEBI:57919"/>
    </ligand>
</feature>
<feature type="binding site" evidence="1">
    <location>
        <begin position="139"/>
        <end position="142"/>
    </location>
    <ligand>
        <name>4-CDP-2-C-methyl-D-erythritol 2-phosphate</name>
        <dbReference type="ChEBI" id="CHEBI:57919"/>
    </ligand>
</feature>
<feature type="binding site" evidence="1">
    <location>
        <position position="146"/>
    </location>
    <ligand>
        <name>4-CDP-2-C-methyl-D-erythritol 2-phosphate</name>
        <dbReference type="ChEBI" id="CHEBI:57919"/>
    </ligand>
</feature>
<feature type="binding site" evidence="1">
    <location>
        <position position="149"/>
    </location>
    <ligand>
        <name>4-CDP-2-C-methyl-D-erythritol 2-phosphate</name>
        <dbReference type="ChEBI" id="CHEBI:57919"/>
    </ligand>
</feature>
<feature type="site" description="Transition state stabilizer" evidence="1">
    <location>
        <position position="41"/>
    </location>
</feature>
<feature type="site" description="Transition state stabilizer" evidence="1">
    <location>
        <position position="140"/>
    </location>
</feature>
<evidence type="ECO:0000255" key="1">
    <source>
        <dbReference type="HAMAP-Rule" id="MF_00107"/>
    </source>
</evidence>
<gene>
    <name evidence="1" type="primary">ispF</name>
    <name type="ordered locus">Pcryo_1149</name>
</gene>
<proteinExistence type="inferred from homology"/>